<evidence type="ECO:0000255" key="1">
    <source>
        <dbReference type="HAMAP-Rule" id="MF_00098"/>
    </source>
</evidence>
<evidence type="ECO:0000305" key="2"/>
<name>SYM_BURM9</name>
<protein>
    <recommendedName>
        <fullName evidence="1">Methionine--tRNA ligase</fullName>
        <ecNumber evidence="1">6.1.1.10</ecNumber>
    </recommendedName>
    <alternativeName>
        <fullName evidence="1">Methionyl-tRNA synthetase</fullName>
        <shortName evidence="1">MetRS</shortName>
    </alternativeName>
</protein>
<accession>A2SAF7</accession>
<comment type="function">
    <text evidence="1">Is required not only for elongation of protein synthesis but also for the initiation of all mRNA translation through initiator tRNA(fMet) aminoacylation.</text>
</comment>
<comment type="catalytic activity">
    <reaction evidence="1">
        <text>tRNA(Met) + L-methionine + ATP = L-methionyl-tRNA(Met) + AMP + diphosphate</text>
        <dbReference type="Rhea" id="RHEA:13481"/>
        <dbReference type="Rhea" id="RHEA-COMP:9667"/>
        <dbReference type="Rhea" id="RHEA-COMP:9698"/>
        <dbReference type="ChEBI" id="CHEBI:30616"/>
        <dbReference type="ChEBI" id="CHEBI:33019"/>
        <dbReference type="ChEBI" id="CHEBI:57844"/>
        <dbReference type="ChEBI" id="CHEBI:78442"/>
        <dbReference type="ChEBI" id="CHEBI:78530"/>
        <dbReference type="ChEBI" id="CHEBI:456215"/>
        <dbReference type="EC" id="6.1.1.10"/>
    </reaction>
</comment>
<comment type="cofactor">
    <cofactor evidence="1">
        <name>Zn(2+)</name>
        <dbReference type="ChEBI" id="CHEBI:29105"/>
    </cofactor>
    <text evidence="1">Binds 1 zinc ion per subunit.</text>
</comment>
<comment type="subunit">
    <text evidence="1">Homodimer.</text>
</comment>
<comment type="subcellular location">
    <subcellularLocation>
        <location evidence="1">Cytoplasm</location>
    </subcellularLocation>
</comment>
<comment type="similarity">
    <text evidence="1">Belongs to the class-I aminoacyl-tRNA synthetase family. MetG type 1 subfamily.</text>
</comment>
<comment type="sequence caution" evidence="2">
    <conflict type="erroneous initiation">
        <sequence resource="EMBL-CDS" id="ABN02660"/>
    </conflict>
</comment>
<feature type="chain" id="PRO_0000331790" description="Methionine--tRNA ligase">
    <location>
        <begin position="1"/>
        <end position="725"/>
    </location>
</feature>
<feature type="domain" description="tRNA-binding" evidence="1">
    <location>
        <begin position="619"/>
        <end position="725"/>
    </location>
</feature>
<feature type="short sequence motif" description="'HIGH' region">
    <location>
        <begin position="27"/>
        <end position="37"/>
    </location>
</feature>
<feature type="short sequence motif" description="'KMSKS' region">
    <location>
        <begin position="348"/>
        <end position="352"/>
    </location>
</feature>
<feature type="binding site" evidence="1">
    <location>
        <position position="158"/>
    </location>
    <ligand>
        <name>Zn(2+)</name>
        <dbReference type="ChEBI" id="CHEBI:29105"/>
    </ligand>
</feature>
<feature type="binding site" evidence="1">
    <location>
        <position position="161"/>
    </location>
    <ligand>
        <name>Zn(2+)</name>
        <dbReference type="ChEBI" id="CHEBI:29105"/>
    </ligand>
</feature>
<feature type="binding site" evidence="1">
    <location>
        <position position="171"/>
    </location>
    <ligand>
        <name>Zn(2+)</name>
        <dbReference type="ChEBI" id="CHEBI:29105"/>
    </ligand>
</feature>
<feature type="binding site" evidence="1">
    <location>
        <position position="174"/>
    </location>
    <ligand>
        <name>Zn(2+)</name>
        <dbReference type="ChEBI" id="CHEBI:29105"/>
    </ligand>
</feature>
<feature type="binding site" evidence="1">
    <location>
        <position position="351"/>
    </location>
    <ligand>
        <name>ATP</name>
        <dbReference type="ChEBI" id="CHEBI:30616"/>
    </ligand>
</feature>
<sequence length="725" mass="79884">MSASDLTSVQAGAPQGRRQILVTSALPYANGQIHIGHLVEYIQTDIWVRTMRMHGHEIYYIGADDTHGTPVMLRAEQEGVSPKQLIERVWREHKRDFDSFGVSFDNFYTTDSDENRVLSETIYLALKEAGFIAEREIEQAYDPVRQMFLPDRFIKGECPKCHAKDQYGDSCEVCGTTYQPTDLIHPYSVVSGAAPVRKTSTHYFFRLSDPRCEAFLREWVSGLAQPEATNKMREWLGEAGEAKLADWDISRDAPYFGFEIPGAPGKYFYVWLDAPVGYYASFKNLCQRRGLDFDAWIRKDSTTEQYHFIGKDILYFHTLFWPAMLEFSGHRTPTNVFAHGFLTVDGAKMSKSRGTFITAQSYIDTGLNPEWLRYYFAAKLNATMEDIDLNLEDFQARVNSDLVGKYVNIASRAAGFLLKRFDGRVQASAMNHPLLATLRGAIPQIAAHYEAREYGRALRQTMELADAVNGYVDSAKPWELAKDPANAVALHETCSVSLEAFRLLSLALKPVLPRVAQGVEAFLGIAPLTWADAGTPLSPEQPVRAYQHLMTRVDPKQIDALLAANRGSLQGTAAAAEAGAANGNGAGSKNGKGAKAAAQPAASAANADDGASPIISIDDFAKIDLRIAKIVACQAVEGSDKLLQLTLDVGEERTRNVFSGIKSAYRPEQLVGKLTVMVANLAPRKMKFGLSEGMVLAASAADEKAEPGLYILEPHSGAKPGMRVK</sequence>
<dbReference type="EC" id="6.1.1.10" evidence="1"/>
<dbReference type="EMBL" id="CP000546">
    <property type="protein sequence ID" value="ABN02660.1"/>
    <property type="status" value="ALT_INIT"/>
    <property type="molecule type" value="Genomic_DNA"/>
</dbReference>
<dbReference type="RefSeq" id="WP_011203868.1">
    <property type="nucleotide sequence ID" value="NC_008836.1"/>
</dbReference>
<dbReference type="SMR" id="A2SAF7"/>
<dbReference type="GeneID" id="92978470"/>
<dbReference type="KEGG" id="bml:BMA10229_A2982"/>
<dbReference type="HOGENOM" id="CLU_009710_7_0_4"/>
<dbReference type="Proteomes" id="UP000002283">
    <property type="component" value="Chromosome I"/>
</dbReference>
<dbReference type="GO" id="GO:0005829">
    <property type="term" value="C:cytosol"/>
    <property type="evidence" value="ECO:0007669"/>
    <property type="project" value="TreeGrafter"/>
</dbReference>
<dbReference type="GO" id="GO:0005524">
    <property type="term" value="F:ATP binding"/>
    <property type="evidence" value="ECO:0007669"/>
    <property type="project" value="UniProtKB-UniRule"/>
</dbReference>
<dbReference type="GO" id="GO:0046872">
    <property type="term" value="F:metal ion binding"/>
    <property type="evidence" value="ECO:0007669"/>
    <property type="project" value="UniProtKB-KW"/>
</dbReference>
<dbReference type="GO" id="GO:0004825">
    <property type="term" value="F:methionine-tRNA ligase activity"/>
    <property type="evidence" value="ECO:0007669"/>
    <property type="project" value="UniProtKB-UniRule"/>
</dbReference>
<dbReference type="GO" id="GO:0000049">
    <property type="term" value="F:tRNA binding"/>
    <property type="evidence" value="ECO:0007669"/>
    <property type="project" value="UniProtKB-KW"/>
</dbReference>
<dbReference type="GO" id="GO:0006431">
    <property type="term" value="P:methionyl-tRNA aminoacylation"/>
    <property type="evidence" value="ECO:0007669"/>
    <property type="project" value="UniProtKB-UniRule"/>
</dbReference>
<dbReference type="CDD" id="cd07957">
    <property type="entry name" value="Anticodon_Ia_Met"/>
    <property type="match status" value="1"/>
</dbReference>
<dbReference type="CDD" id="cd00814">
    <property type="entry name" value="MetRS_core"/>
    <property type="match status" value="1"/>
</dbReference>
<dbReference type="CDD" id="cd02800">
    <property type="entry name" value="tRNA_bind_EcMetRS_like"/>
    <property type="match status" value="1"/>
</dbReference>
<dbReference type="FunFam" id="2.20.28.20:FF:000001">
    <property type="entry name" value="Methionine--tRNA ligase"/>
    <property type="match status" value="1"/>
</dbReference>
<dbReference type="FunFam" id="2.40.50.140:FF:000042">
    <property type="entry name" value="Methionine--tRNA ligase"/>
    <property type="match status" value="1"/>
</dbReference>
<dbReference type="Gene3D" id="3.40.50.620">
    <property type="entry name" value="HUPs"/>
    <property type="match status" value="1"/>
</dbReference>
<dbReference type="Gene3D" id="1.10.730.10">
    <property type="entry name" value="Isoleucyl-tRNA Synthetase, Domain 1"/>
    <property type="match status" value="1"/>
</dbReference>
<dbReference type="Gene3D" id="2.20.28.20">
    <property type="entry name" value="Methionyl-tRNA synthetase, Zn-domain"/>
    <property type="match status" value="1"/>
</dbReference>
<dbReference type="Gene3D" id="2.40.50.140">
    <property type="entry name" value="Nucleic acid-binding proteins"/>
    <property type="match status" value="1"/>
</dbReference>
<dbReference type="HAMAP" id="MF_00098">
    <property type="entry name" value="Met_tRNA_synth_type1"/>
    <property type="match status" value="1"/>
</dbReference>
<dbReference type="InterPro" id="IPR001412">
    <property type="entry name" value="aa-tRNA-synth_I_CS"/>
</dbReference>
<dbReference type="InterPro" id="IPR041872">
    <property type="entry name" value="Anticodon_Met"/>
</dbReference>
<dbReference type="InterPro" id="IPR004495">
    <property type="entry name" value="Met-tRNA-synth_bsu_C"/>
</dbReference>
<dbReference type="InterPro" id="IPR023458">
    <property type="entry name" value="Met-tRNA_ligase_1"/>
</dbReference>
<dbReference type="InterPro" id="IPR014758">
    <property type="entry name" value="Met-tRNA_synth"/>
</dbReference>
<dbReference type="InterPro" id="IPR015413">
    <property type="entry name" value="Methionyl/Leucyl_tRNA_Synth"/>
</dbReference>
<dbReference type="InterPro" id="IPR033911">
    <property type="entry name" value="MetRS_core"/>
</dbReference>
<dbReference type="InterPro" id="IPR029038">
    <property type="entry name" value="MetRS_Zn"/>
</dbReference>
<dbReference type="InterPro" id="IPR012340">
    <property type="entry name" value="NA-bd_OB-fold"/>
</dbReference>
<dbReference type="InterPro" id="IPR014729">
    <property type="entry name" value="Rossmann-like_a/b/a_fold"/>
</dbReference>
<dbReference type="InterPro" id="IPR002547">
    <property type="entry name" value="tRNA-bd_dom"/>
</dbReference>
<dbReference type="InterPro" id="IPR009080">
    <property type="entry name" value="tRNAsynth_Ia_anticodon-bd"/>
</dbReference>
<dbReference type="NCBIfam" id="TIGR00398">
    <property type="entry name" value="metG"/>
    <property type="match status" value="1"/>
</dbReference>
<dbReference type="NCBIfam" id="TIGR00399">
    <property type="entry name" value="metG_C_term"/>
    <property type="match status" value="1"/>
</dbReference>
<dbReference type="NCBIfam" id="NF001100">
    <property type="entry name" value="PRK00133.1"/>
    <property type="match status" value="1"/>
</dbReference>
<dbReference type="PANTHER" id="PTHR45765">
    <property type="entry name" value="METHIONINE--TRNA LIGASE"/>
    <property type="match status" value="1"/>
</dbReference>
<dbReference type="PANTHER" id="PTHR45765:SF1">
    <property type="entry name" value="METHIONINE--TRNA LIGASE, CYTOPLASMIC"/>
    <property type="match status" value="1"/>
</dbReference>
<dbReference type="Pfam" id="PF19303">
    <property type="entry name" value="Anticodon_3"/>
    <property type="match status" value="1"/>
</dbReference>
<dbReference type="Pfam" id="PF09334">
    <property type="entry name" value="tRNA-synt_1g"/>
    <property type="match status" value="1"/>
</dbReference>
<dbReference type="Pfam" id="PF01588">
    <property type="entry name" value="tRNA_bind"/>
    <property type="match status" value="1"/>
</dbReference>
<dbReference type="PRINTS" id="PR01041">
    <property type="entry name" value="TRNASYNTHMET"/>
</dbReference>
<dbReference type="SUPFAM" id="SSF47323">
    <property type="entry name" value="Anticodon-binding domain of a subclass of class I aminoacyl-tRNA synthetases"/>
    <property type="match status" value="1"/>
</dbReference>
<dbReference type="SUPFAM" id="SSF57770">
    <property type="entry name" value="Methionyl-tRNA synthetase (MetRS), Zn-domain"/>
    <property type="match status" value="1"/>
</dbReference>
<dbReference type="SUPFAM" id="SSF50249">
    <property type="entry name" value="Nucleic acid-binding proteins"/>
    <property type="match status" value="1"/>
</dbReference>
<dbReference type="SUPFAM" id="SSF52374">
    <property type="entry name" value="Nucleotidylyl transferase"/>
    <property type="match status" value="1"/>
</dbReference>
<dbReference type="PROSITE" id="PS00178">
    <property type="entry name" value="AA_TRNA_LIGASE_I"/>
    <property type="match status" value="1"/>
</dbReference>
<dbReference type="PROSITE" id="PS50886">
    <property type="entry name" value="TRBD"/>
    <property type="match status" value="1"/>
</dbReference>
<gene>
    <name evidence="1" type="primary">metG</name>
    <name type="ordered locus">BMA10229_A2982</name>
</gene>
<reference key="1">
    <citation type="journal article" date="2010" name="Genome Biol. Evol.">
        <title>Continuing evolution of Burkholderia mallei through genome reduction and large-scale rearrangements.</title>
        <authorList>
            <person name="Losada L."/>
            <person name="Ronning C.M."/>
            <person name="DeShazer D."/>
            <person name="Woods D."/>
            <person name="Fedorova N."/>
            <person name="Kim H.S."/>
            <person name="Shabalina S.A."/>
            <person name="Pearson T.R."/>
            <person name="Brinkac L."/>
            <person name="Tan P."/>
            <person name="Nandi T."/>
            <person name="Crabtree J."/>
            <person name="Badger J."/>
            <person name="Beckstrom-Sternberg S."/>
            <person name="Saqib M."/>
            <person name="Schutzer S.E."/>
            <person name="Keim P."/>
            <person name="Nierman W.C."/>
        </authorList>
    </citation>
    <scope>NUCLEOTIDE SEQUENCE [LARGE SCALE GENOMIC DNA]</scope>
    <source>
        <strain>NCTC 10229</strain>
    </source>
</reference>
<organism>
    <name type="scientific">Burkholderia mallei (strain NCTC 10229)</name>
    <dbReference type="NCBI Taxonomy" id="412022"/>
    <lineage>
        <taxon>Bacteria</taxon>
        <taxon>Pseudomonadati</taxon>
        <taxon>Pseudomonadota</taxon>
        <taxon>Betaproteobacteria</taxon>
        <taxon>Burkholderiales</taxon>
        <taxon>Burkholderiaceae</taxon>
        <taxon>Burkholderia</taxon>
        <taxon>pseudomallei group</taxon>
    </lineage>
</organism>
<proteinExistence type="inferred from homology"/>
<keyword id="KW-0030">Aminoacyl-tRNA synthetase</keyword>
<keyword id="KW-0067">ATP-binding</keyword>
<keyword id="KW-0963">Cytoplasm</keyword>
<keyword id="KW-0436">Ligase</keyword>
<keyword id="KW-0479">Metal-binding</keyword>
<keyword id="KW-0547">Nucleotide-binding</keyword>
<keyword id="KW-0648">Protein biosynthesis</keyword>
<keyword id="KW-0694">RNA-binding</keyword>
<keyword id="KW-0820">tRNA-binding</keyword>
<keyword id="KW-0862">Zinc</keyword>